<reference key="1">
    <citation type="journal article" date="1990" name="J. Mol. Evol.">
        <title>Independent gene evolution in the potato actin gene family demonstrated by phylogenetic procedures for resolving gene conversions and the phylogeny of angiosperm actin genes.</title>
        <authorList>
            <person name="Drouin G."/>
            <person name="Dover G.A."/>
        </authorList>
    </citation>
    <scope>NUCLEOTIDE SEQUENCE [GENOMIC DNA]</scope>
    <source>
        <strain>cv. Maris Piper</strain>
        <tissue>Leaf</tissue>
    </source>
</reference>
<feature type="chain" id="PRO_0000089020" description="Actin-101">
    <location>
        <begin position="1"/>
        <end position="377"/>
    </location>
</feature>
<organism>
    <name type="scientific">Solanum tuberosum</name>
    <name type="common">Potato</name>
    <dbReference type="NCBI Taxonomy" id="4113"/>
    <lineage>
        <taxon>Eukaryota</taxon>
        <taxon>Viridiplantae</taxon>
        <taxon>Streptophyta</taxon>
        <taxon>Embryophyta</taxon>
        <taxon>Tracheophyta</taxon>
        <taxon>Spermatophyta</taxon>
        <taxon>Magnoliopsida</taxon>
        <taxon>eudicotyledons</taxon>
        <taxon>Gunneridae</taxon>
        <taxon>Pentapetalae</taxon>
        <taxon>asterids</taxon>
        <taxon>lamiids</taxon>
        <taxon>Solanales</taxon>
        <taxon>Solanaceae</taxon>
        <taxon>Solanoideae</taxon>
        <taxon>Solaneae</taxon>
        <taxon>Solanum</taxon>
    </lineage>
</organism>
<dbReference type="EC" id="3.6.4.-" evidence="1"/>
<dbReference type="EMBL" id="X55752">
    <property type="protein sequence ID" value="CAA39281.1"/>
    <property type="molecule type" value="Genomic_DNA"/>
</dbReference>
<dbReference type="PIR" id="S20093">
    <property type="entry name" value="S20093"/>
</dbReference>
<dbReference type="SMR" id="P30173"/>
<dbReference type="STRING" id="4113.P30173"/>
<dbReference type="PaxDb" id="4113-PGSC0003DMT400047481"/>
<dbReference type="InParanoid" id="P30173"/>
<dbReference type="Proteomes" id="UP000011115">
    <property type="component" value="Unassembled WGS sequence"/>
</dbReference>
<dbReference type="ExpressionAtlas" id="P30173">
    <property type="expression patterns" value="baseline"/>
</dbReference>
<dbReference type="GO" id="GO:0015629">
    <property type="term" value="C:actin cytoskeleton"/>
    <property type="evidence" value="ECO:0000318"/>
    <property type="project" value="GO_Central"/>
</dbReference>
<dbReference type="GO" id="GO:0005737">
    <property type="term" value="C:cytoplasm"/>
    <property type="evidence" value="ECO:0007669"/>
    <property type="project" value="UniProtKB-KW"/>
</dbReference>
<dbReference type="GO" id="GO:0005524">
    <property type="term" value="F:ATP binding"/>
    <property type="evidence" value="ECO:0007669"/>
    <property type="project" value="UniProtKB-KW"/>
</dbReference>
<dbReference type="GO" id="GO:0016787">
    <property type="term" value="F:hydrolase activity"/>
    <property type="evidence" value="ECO:0007669"/>
    <property type="project" value="UniProtKB-KW"/>
</dbReference>
<dbReference type="CDD" id="cd10224">
    <property type="entry name" value="ASKHA_NBD_actin"/>
    <property type="match status" value="1"/>
</dbReference>
<dbReference type="FunFam" id="2.30.36.70:FF:000001">
    <property type="entry name" value="Actin, alpha skeletal muscle"/>
    <property type="match status" value="1"/>
</dbReference>
<dbReference type="FunFam" id="3.30.420.40:FF:000291">
    <property type="entry name" value="Actin, alpha skeletal muscle"/>
    <property type="match status" value="1"/>
</dbReference>
<dbReference type="FunFam" id="3.90.640.10:FF:000001">
    <property type="entry name" value="Actin, muscle"/>
    <property type="match status" value="1"/>
</dbReference>
<dbReference type="FunFam" id="3.30.420.40:FF:000404">
    <property type="entry name" value="Major actin"/>
    <property type="match status" value="1"/>
</dbReference>
<dbReference type="FunFam" id="3.30.420.40:FF:000058">
    <property type="entry name" value="Putative actin-related protein 5"/>
    <property type="match status" value="1"/>
</dbReference>
<dbReference type="Gene3D" id="3.30.420.40">
    <property type="match status" value="2"/>
</dbReference>
<dbReference type="Gene3D" id="3.90.640.10">
    <property type="entry name" value="Actin, Chain A, domain 4"/>
    <property type="match status" value="1"/>
</dbReference>
<dbReference type="InterPro" id="IPR004000">
    <property type="entry name" value="Actin"/>
</dbReference>
<dbReference type="InterPro" id="IPR020902">
    <property type="entry name" value="Actin/actin-like_CS"/>
</dbReference>
<dbReference type="InterPro" id="IPR004001">
    <property type="entry name" value="Actin_CS"/>
</dbReference>
<dbReference type="InterPro" id="IPR043129">
    <property type="entry name" value="ATPase_NBD"/>
</dbReference>
<dbReference type="PANTHER" id="PTHR11937">
    <property type="entry name" value="ACTIN"/>
    <property type="match status" value="1"/>
</dbReference>
<dbReference type="Pfam" id="PF00022">
    <property type="entry name" value="Actin"/>
    <property type="match status" value="1"/>
</dbReference>
<dbReference type="PRINTS" id="PR00190">
    <property type="entry name" value="ACTIN"/>
</dbReference>
<dbReference type="SMART" id="SM00268">
    <property type="entry name" value="ACTIN"/>
    <property type="match status" value="1"/>
</dbReference>
<dbReference type="SUPFAM" id="SSF53067">
    <property type="entry name" value="Actin-like ATPase domain"/>
    <property type="match status" value="2"/>
</dbReference>
<dbReference type="PROSITE" id="PS00406">
    <property type="entry name" value="ACTINS_1"/>
    <property type="match status" value="1"/>
</dbReference>
<dbReference type="PROSITE" id="PS00432">
    <property type="entry name" value="ACTINS_2"/>
    <property type="match status" value="1"/>
</dbReference>
<dbReference type="PROSITE" id="PS01132">
    <property type="entry name" value="ACTINS_ACT_LIKE"/>
    <property type="match status" value="1"/>
</dbReference>
<sequence>MADAEDIEPLVCDNGTGMVKAGFAGDDAPRAVFPSIVGRPRHTGVMVGMGQKDAYVGDEAQSKRGILTLKYPIEHGIVSNWDDMEKIWHHTFYNELRVSPDEHPVLLTEAPLNPKANREKMTQIMFETFNVPAMYVAIQAVLSLYASGRTTGIVLDSGDGVSHTVPIYEGYALPHAILRLDLAGRDLTDCLMKILTERGYSFTTSAEREIVRDMKEKLAYVALDYEQELETAKSSSAVEKSYELPDGQVITIGAERFRCPEVLFQPSLVGMEAAGIHETTYNSIMKCDVDIRKDLYGNIVLSGGTTMFPGIADRMSKEITALAPSSMKIKVVAPPERKYSVWIGGSILASLSTFQQMWITKGEYDESGPSIVHRKCF</sequence>
<evidence type="ECO:0000250" key="1">
    <source>
        <dbReference type="UniProtKB" id="P68137"/>
    </source>
</evidence>
<evidence type="ECO:0000305" key="2"/>
<accession>P30173</accession>
<proteinExistence type="inferred from homology"/>
<protein>
    <recommendedName>
        <fullName>Actin-101</fullName>
        <ecNumber evidence="1">3.6.4.-</ecNumber>
    </recommendedName>
</protein>
<name>ACT13_SOLTU</name>
<keyword id="KW-0067">ATP-binding</keyword>
<keyword id="KW-0963">Cytoplasm</keyword>
<keyword id="KW-0206">Cytoskeleton</keyword>
<keyword id="KW-0378">Hydrolase</keyword>
<keyword id="KW-0547">Nucleotide-binding</keyword>
<keyword id="KW-1185">Reference proteome</keyword>
<gene>
    <name type="primary">AC101</name>
</gene>
<comment type="function">
    <text>Actins are highly conserved proteins that are involved in various types of cell motility and are ubiquitously expressed in all eukaryotic cells. Essential component of cell cytoskeleton; plays an important role in cytoplasmic streaming, cell shape determination, cell division, organelle movement and extension growth.</text>
</comment>
<comment type="catalytic activity">
    <reaction evidence="1">
        <text>ATP + H2O = ADP + phosphate + H(+)</text>
        <dbReference type="Rhea" id="RHEA:13065"/>
        <dbReference type="ChEBI" id="CHEBI:15377"/>
        <dbReference type="ChEBI" id="CHEBI:15378"/>
        <dbReference type="ChEBI" id="CHEBI:30616"/>
        <dbReference type="ChEBI" id="CHEBI:43474"/>
        <dbReference type="ChEBI" id="CHEBI:456216"/>
    </reaction>
</comment>
<comment type="subcellular location">
    <subcellularLocation>
        <location>Cytoplasm</location>
        <location>Cytoskeleton</location>
    </subcellularLocation>
</comment>
<comment type="miscellaneous">
    <text>There are at least 13 actin genes in potato.</text>
</comment>
<comment type="similarity">
    <text evidence="2">Belongs to the actin family.</text>
</comment>